<name>NRDR_ACTSZ</name>
<protein>
    <recommendedName>
        <fullName evidence="1">Transcriptional repressor NrdR</fullName>
    </recommendedName>
</protein>
<accession>A6VP30</accession>
<gene>
    <name evidence="1" type="primary">nrdR</name>
    <name type="ordered locus">Asuc_1367</name>
</gene>
<sequence>MHCPFCSTEETKVIDSRLVSEGYQVRRRRECTNCHERFTTFETAELVIPKIVKTDGYREPFNEDKLRRSIQQAVGKRPVSEDDVEKSISCIIHKLQTTGEREVPSKLVGDLVMDELKKLDKVAYIRFASVYLSFENINEFTKEIEKLKKSQK</sequence>
<feature type="chain" id="PRO_1000080701" description="Transcriptional repressor NrdR">
    <location>
        <begin position="1"/>
        <end position="152"/>
    </location>
</feature>
<feature type="domain" description="ATP-cone" evidence="1">
    <location>
        <begin position="49"/>
        <end position="139"/>
    </location>
</feature>
<feature type="zinc finger region" evidence="1">
    <location>
        <begin position="3"/>
        <end position="34"/>
    </location>
</feature>
<dbReference type="EMBL" id="CP000746">
    <property type="protein sequence ID" value="ABR74727.1"/>
    <property type="molecule type" value="Genomic_DNA"/>
</dbReference>
<dbReference type="RefSeq" id="WP_012073104.1">
    <property type="nucleotide sequence ID" value="NC_009655.1"/>
</dbReference>
<dbReference type="SMR" id="A6VP30"/>
<dbReference type="STRING" id="339671.Asuc_1367"/>
<dbReference type="KEGG" id="asu:Asuc_1367"/>
<dbReference type="eggNOG" id="COG1327">
    <property type="taxonomic scope" value="Bacteria"/>
</dbReference>
<dbReference type="HOGENOM" id="CLU_108412_0_0_6"/>
<dbReference type="OrthoDB" id="9807461at2"/>
<dbReference type="Proteomes" id="UP000001114">
    <property type="component" value="Chromosome"/>
</dbReference>
<dbReference type="GO" id="GO:0005524">
    <property type="term" value="F:ATP binding"/>
    <property type="evidence" value="ECO:0007669"/>
    <property type="project" value="UniProtKB-KW"/>
</dbReference>
<dbReference type="GO" id="GO:0003677">
    <property type="term" value="F:DNA binding"/>
    <property type="evidence" value="ECO:0007669"/>
    <property type="project" value="UniProtKB-KW"/>
</dbReference>
<dbReference type="GO" id="GO:0008270">
    <property type="term" value="F:zinc ion binding"/>
    <property type="evidence" value="ECO:0007669"/>
    <property type="project" value="UniProtKB-UniRule"/>
</dbReference>
<dbReference type="GO" id="GO:0045892">
    <property type="term" value="P:negative regulation of DNA-templated transcription"/>
    <property type="evidence" value="ECO:0007669"/>
    <property type="project" value="UniProtKB-UniRule"/>
</dbReference>
<dbReference type="HAMAP" id="MF_00440">
    <property type="entry name" value="NrdR"/>
    <property type="match status" value="1"/>
</dbReference>
<dbReference type="InterPro" id="IPR005144">
    <property type="entry name" value="ATP-cone_dom"/>
</dbReference>
<dbReference type="InterPro" id="IPR055173">
    <property type="entry name" value="NrdR-like_N"/>
</dbReference>
<dbReference type="InterPro" id="IPR003796">
    <property type="entry name" value="RNR_NrdR-like"/>
</dbReference>
<dbReference type="NCBIfam" id="TIGR00244">
    <property type="entry name" value="transcriptional regulator NrdR"/>
    <property type="match status" value="1"/>
</dbReference>
<dbReference type="PANTHER" id="PTHR30455">
    <property type="entry name" value="TRANSCRIPTIONAL REPRESSOR NRDR"/>
    <property type="match status" value="1"/>
</dbReference>
<dbReference type="PANTHER" id="PTHR30455:SF2">
    <property type="entry name" value="TRANSCRIPTIONAL REPRESSOR NRDR"/>
    <property type="match status" value="1"/>
</dbReference>
<dbReference type="Pfam" id="PF03477">
    <property type="entry name" value="ATP-cone"/>
    <property type="match status" value="1"/>
</dbReference>
<dbReference type="Pfam" id="PF22811">
    <property type="entry name" value="Zn_ribbon_NrdR"/>
    <property type="match status" value="1"/>
</dbReference>
<dbReference type="PROSITE" id="PS51161">
    <property type="entry name" value="ATP_CONE"/>
    <property type="match status" value="1"/>
</dbReference>
<evidence type="ECO:0000255" key="1">
    <source>
        <dbReference type="HAMAP-Rule" id="MF_00440"/>
    </source>
</evidence>
<comment type="function">
    <text evidence="1">Negatively regulates transcription of bacterial ribonucleotide reductase nrd genes and operons by binding to NrdR-boxes.</text>
</comment>
<comment type="cofactor">
    <cofactor evidence="1">
        <name>Zn(2+)</name>
        <dbReference type="ChEBI" id="CHEBI:29105"/>
    </cofactor>
    <text evidence="1">Binds 1 zinc ion.</text>
</comment>
<comment type="similarity">
    <text evidence="1">Belongs to the NrdR family.</text>
</comment>
<keyword id="KW-0067">ATP-binding</keyword>
<keyword id="KW-0238">DNA-binding</keyword>
<keyword id="KW-0479">Metal-binding</keyword>
<keyword id="KW-0547">Nucleotide-binding</keyword>
<keyword id="KW-1185">Reference proteome</keyword>
<keyword id="KW-0678">Repressor</keyword>
<keyword id="KW-0804">Transcription</keyword>
<keyword id="KW-0805">Transcription regulation</keyword>
<keyword id="KW-0862">Zinc</keyword>
<keyword id="KW-0863">Zinc-finger</keyword>
<proteinExistence type="inferred from homology"/>
<organism>
    <name type="scientific">Actinobacillus succinogenes (strain ATCC 55618 / DSM 22257 / CCUG 43843 / 130Z)</name>
    <dbReference type="NCBI Taxonomy" id="339671"/>
    <lineage>
        <taxon>Bacteria</taxon>
        <taxon>Pseudomonadati</taxon>
        <taxon>Pseudomonadota</taxon>
        <taxon>Gammaproteobacteria</taxon>
        <taxon>Pasteurellales</taxon>
        <taxon>Pasteurellaceae</taxon>
        <taxon>Actinobacillus</taxon>
    </lineage>
</organism>
<reference key="1">
    <citation type="journal article" date="2010" name="BMC Genomics">
        <title>A genomic perspective on the potential of Actinobacillus succinogenes for industrial succinate production.</title>
        <authorList>
            <person name="McKinlay J.B."/>
            <person name="Laivenieks M."/>
            <person name="Schindler B.D."/>
            <person name="McKinlay A.A."/>
            <person name="Siddaramappa S."/>
            <person name="Challacombe J.F."/>
            <person name="Lowry S.R."/>
            <person name="Clum A."/>
            <person name="Lapidus A.L."/>
            <person name="Burkhart K.B."/>
            <person name="Harkins V."/>
            <person name="Vieille C."/>
        </authorList>
    </citation>
    <scope>NUCLEOTIDE SEQUENCE [LARGE SCALE GENOMIC DNA]</scope>
    <source>
        <strain>ATCC 55618 / DSM 22257 / CCUG 43843 / 130Z</strain>
    </source>
</reference>